<name>SYC_MYCSJ</name>
<accession>A3Q6W0</accession>
<dbReference type="EC" id="6.1.1.16" evidence="1"/>
<dbReference type="EMBL" id="CP000580">
    <property type="protein sequence ID" value="ABO00888.1"/>
    <property type="molecule type" value="Genomic_DNA"/>
</dbReference>
<dbReference type="SMR" id="A3Q6W0"/>
<dbReference type="KEGG" id="mjl:Mjls_5123"/>
<dbReference type="HOGENOM" id="CLU_013528_0_1_11"/>
<dbReference type="BioCyc" id="MSP164757:G1G8C-5173-MONOMER"/>
<dbReference type="GO" id="GO:0005829">
    <property type="term" value="C:cytosol"/>
    <property type="evidence" value="ECO:0007669"/>
    <property type="project" value="TreeGrafter"/>
</dbReference>
<dbReference type="GO" id="GO:0005524">
    <property type="term" value="F:ATP binding"/>
    <property type="evidence" value="ECO:0007669"/>
    <property type="project" value="UniProtKB-UniRule"/>
</dbReference>
<dbReference type="GO" id="GO:0004817">
    <property type="term" value="F:cysteine-tRNA ligase activity"/>
    <property type="evidence" value="ECO:0007669"/>
    <property type="project" value="UniProtKB-UniRule"/>
</dbReference>
<dbReference type="GO" id="GO:0008270">
    <property type="term" value="F:zinc ion binding"/>
    <property type="evidence" value="ECO:0007669"/>
    <property type="project" value="UniProtKB-UniRule"/>
</dbReference>
<dbReference type="GO" id="GO:0006423">
    <property type="term" value="P:cysteinyl-tRNA aminoacylation"/>
    <property type="evidence" value="ECO:0007669"/>
    <property type="project" value="UniProtKB-UniRule"/>
</dbReference>
<dbReference type="CDD" id="cd00672">
    <property type="entry name" value="CysRS_core"/>
    <property type="match status" value="1"/>
</dbReference>
<dbReference type="FunFam" id="3.40.50.620:FF:000068">
    <property type="entry name" value="Cysteine--tRNA ligase"/>
    <property type="match status" value="1"/>
</dbReference>
<dbReference type="Gene3D" id="1.20.120.1910">
    <property type="entry name" value="Cysteine-tRNA ligase, C-terminal anti-codon recognition domain"/>
    <property type="match status" value="1"/>
</dbReference>
<dbReference type="Gene3D" id="3.40.50.620">
    <property type="entry name" value="HUPs"/>
    <property type="match status" value="1"/>
</dbReference>
<dbReference type="HAMAP" id="MF_00041">
    <property type="entry name" value="Cys_tRNA_synth"/>
    <property type="match status" value="1"/>
</dbReference>
<dbReference type="InterPro" id="IPR015803">
    <property type="entry name" value="Cys-tRNA-ligase"/>
</dbReference>
<dbReference type="InterPro" id="IPR015273">
    <property type="entry name" value="Cys-tRNA-synt_Ia_DALR"/>
</dbReference>
<dbReference type="InterPro" id="IPR024909">
    <property type="entry name" value="Cys-tRNA/MSH_ligase"/>
</dbReference>
<dbReference type="InterPro" id="IPR056411">
    <property type="entry name" value="CysS_C"/>
</dbReference>
<dbReference type="InterPro" id="IPR014729">
    <property type="entry name" value="Rossmann-like_a/b/a_fold"/>
</dbReference>
<dbReference type="InterPro" id="IPR032678">
    <property type="entry name" value="tRNA-synt_1_cat_dom"/>
</dbReference>
<dbReference type="InterPro" id="IPR009080">
    <property type="entry name" value="tRNAsynth_Ia_anticodon-bd"/>
</dbReference>
<dbReference type="NCBIfam" id="TIGR00435">
    <property type="entry name" value="cysS"/>
    <property type="match status" value="1"/>
</dbReference>
<dbReference type="PANTHER" id="PTHR10890:SF30">
    <property type="entry name" value="CYSTEINE--TRNA LIGASE"/>
    <property type="match status" value="1"/>
</dbReference>
<dbReference type="PANTHER" id="PTHR10890">
    <property type="entry name" value="CYSTEINYL-TRNA SYNTHETASE"/>
    <property type="match status" value="1"/>
</dbReference>
<dbReference type="Pfam" id="PF23493">
    <property type="entry name" value="CysS_C"/>
    <property type="match status" value="1"/>
</dbReference>
<dbReference type="Pfam" id="PF01406">
    <property type="entry name" value="tRNA-synt_1e"/>
    <property type="match status" value="1"/>
</dbReference>
<dbReference type="PRINTS" id="PR00983">
    <property type="entry name" value="TRNASYNTHCYS"/>
</dbReference>
<dbReference type="SMART" id="SM00840">
    <property type="entry name" value="DALR_2"/>
    <property type="match status" value="1"/>
</dbReference>
<dbReference type="SUPFAM" id="SSF47323">
    <property type="entry name" value="Anticodon-binding domain of a subclass of class I aminoacyl-tRNA synthetases"/>
    <property type="match status" value="1"/>
</dbReference>
<dbReference type="SUPFAM" id="SSF52374">
    <property type="entry name" value="Nucleotidylyl transferase"/>
    <property type="match status" value="1"/>
</dbReference>
<gene>
    <name evidence="1" type="primary">cysS</name>
    <name type="ordered locus">Mjls_5123</name>
</gene>
<feature type="chain" id="PRO_0000332855" description="Cysteine--tRNA ligase">
    <location>
        <begin position="1"/>
        <end position="481"/>
    </location>
</feature>
<feature type="short sequence motif" description="'HIGH' region">
    <location>
        <begin position="45"/>
        <end position="55"/>
    </location>
</feature>
<feature type="short sequence motif" description="'KMSKS' region">
    <location>
        <begin position="277"/>
        <end position="281"/>
    </location>
</feature>
<feature type="binding site" evidence="1">
    <location>
        <position position="43"/>
    </location>
    <ligand>
        <name>Zn(2+)</name>
        <dbReference type="ChEBI" id="CHEBI:29105"/>
    </ligand>
</feature>
<feature type="binding site" evidence="1">
    <location>
        <position position="221"/>
    </location>
    <ligand>
        <name>Zn(2+)</name>
        <dbReference type="ChEBI" id="CHEBI:29105"/>
    </ligand>
</feature>
<feature type="binding site" evidence="1">
    <location>
        <position position="246"/>
    </location>
    <ligand>
        <name>Zn(2+)</name>
        <dbReference type="ChEBI" id="CHEBI:29105"/>
    </ligand>
</feature>
<feature type="binding site" evidence="1">
    <location>
        <position position="250"/>
    </location>
    <ligand>
        <name>Zn(2+)</name>
        <dbReference type="ChEBI" id="CHEBI:29105"/>
    </ligand>
</feature>
<feature type="binding site" evidence="1">
    <location>
        <position position="280"/>
    </location>
    <ligand>
        <name>ATP</name>
        <dbReference type="ChEBI" id="CHEBI:30616"/>
    </ligand>
</feature>
<comment type="catalytic activity">
    <reaction evidence="1">
        <text>tRNA(Cys) + L-cysteine + ATP = L-cysteinyl-tRNA(Cys) + AMP + diphosphate</text>
        <dbReference type="Rhea" id="RHEA:17773"/>
        <dbReference type="Rhea" id="RHEA-COMP:9661"/>
        <dbReference type="Rhea" id="RHEA-COMP:9679"/>
        <dbReference type="ChEBI" id="CHEBI:30616"/>
        <dbReference type="ChEBI" id="CHEBI:33019"/>
        <dbReference type="ChEBI" id="CHEBI:35235"/>
        <dbReference type="ChEBI" id="CHEBI:78442"/>
        <dbReference type="ChEBI" id="CHEBI:78517"/>
        <dbReference type="ChEBI" id="CHEBI:456215"/>
        <dbReference type="EC" id="6.1.1.16"/>
    </reaction>
</comment>
<comment type="cofactor">
    <cofactor evidence="1">
        <name>Zn(2+)</name>
        <dbReference type="ChEBI" id="CHEBI:29105"/>
    </cofactor>
    <text evidence="1">Binds 1 zinc ion per subunit.</text>
</comment>
<comment type="subunit">
    <text evidence="1">Monomer.</text>
</comment>
<comment type="subcellular location">
    <subcellularLocation>
        <location evidence="1">Cytoplasm</location>
    </subcellularLocation>
</comment>
<comment type="similarity">
    <text evidence="1">Belongs to the class-I aminoacyl-tRNA synthetase family.</text>
</comment>
<sequence length="481" mass="52856">MTDRADADRPATSPTGLRLYDTMTGAVRDFVPLRDGHVSIYLCGATVQGLPHIGHVRSGVAFDVLRRWLTAKGLDVAFIRNVTDIDDKILNKAADAGRPWWEWAATYERAFSAAYDALGVLPPSAEPRATGHITQMVELIERLIDRGHAYTGDGDVYFNVATLPDYGKLSGHRIDDVHQGEGVATGKRDQRDFTLWKGAKPGEPSWPTPWGRGRPGWHTECVAMCEAYLGAEFDIHAGGMDLVFPHHENEIAQAEAAGDGFARFWLHNGWVTMGGEKMSKSLGNVLSIPAVLQRVRAAELRYYLGSAHYRSMLEFSETALQDAVKAYAGVEDFLHRVRTRVGTVVPGDWTPKFAAALDDDLSVPIALAEVHAARAVGNRALDSGDHETAMTQARSIRAMMGILGCDPLDERWESRDETSAALAAIDVLVRWALDSRAEARNRKDWATADQIRDRLKEAGIEVTDTADGPQWSLLDGDSKDV</sequence>
<evidence type="ECO:0000255" key="1">
    <source>
        <dbReference type="HAMAP-Rule" id="MF_00041"/>
    </source>
</evidence>
<organism>
    <name type="scientific">Mycobacterium sp. (strain JLS)</name>
    <dbReference type="NCBI Taxonomy" id="164757"/>
    <lineage>
        <taxon>Bacteria</taxon>
        <taxon>Bacillati</taxon>
        <taxon>Actinomycetota</taxon>
        <taxon>Actinomycetes</taxon>
        <taxon>Mycobacteriales</taxon>
        <taxon>Mycobacteriaceae</taxon>
        <taxon>Mycobacterium</taxon>
    </lineage>
</organism>
<keyword id="KW-0030">Aminoacyl-tRNA synthetase</keyword>
<keyword id="KW-0067">ATP-binding</keyword>
<keyword id="KW-0963">Cytoplasm</keyword>
<keyword id="KW-0436">Ligase</keyword>
<keyword id="KW-0479">Metal-binding</keyword>
<keyword id="KW-0547">Nucleotide-binding</keyword>
<keyword id="KW-0648">Protein biosynthesis</keyword>
<keyword id="KW-0862">Zinc</keyword>
<reference key="1">
    <citation type="submission" date="2007-02" db="EMBL/GenBank/DDBJ databases">
        <title>Complete sequence of Mycobacterium sp. JLS.</title>
        <authorList>
            <consortium name="US DOE Joint Genome Institute"/>
            <person name="Copeland A."/>
            <person name="Lucas S."/>
            <person name="Lapidus A."/>
            <person name="Barry K."/>
            <person name="Detter J.C."/>
            <person name="Glavina del Rio T."/>
            <person name="Hammon N."/>
            <person name="Israni S."/>
            <person name="Dalin E."/>
            <person name="Tice H."/>
            <person name="Pitluck S."/>
            <person name="Chain P."/>
            <person name="Malfatti S."/>
            <person name="Shin M."/>
            <person name="Vergez L."/>
            <person name="Schmutz J."/>
            <person name="Larimer F."/>
            <person name="Land M."/>
            <person name="Hauser L."/>
            <person name="Kyrpides N."/>
            <person name="Mikhailova N."/>
            <person name="Miller C.D."/>
            <person name="Anderson A.J."/>
            <person name="Sims R.C."/>
            <person name="Richardson P."/>
        </authorList>
    </citation>
    <scope>NUCLEOTIDE SEQUENCE [LARGE SCALE GENOMIC DNA]</scope>
    <source>
        <strain>JLS</strain>
    </source>
</reference>
<protein>
    <recommendedName>
        <fullName evidence="1">Cysteine--tRNA ligase</fullName>
        <ecNumber evidence="1">6.1.1.16</ecNumber>
    </recommendedName>
    <alternativeName>
        <fullName evidence="1">Cysteinyl-tRNA synthetase</fullName>
        <shortName evidence="1">CysRS</shortName>
    </alternativeName>
</protein>
<proteinExistence type="inferred from homology"/>